<protein>
    <recommendedName>
        <fullName>MAPK phosphothreonine lyase</fullName>
        <ecNumber>4.2.3.-</ecNumber>
    </recommendedName>
    <alternativeName>
        <fullName>27.5 kDa virulence protein</fullName>
    </alternativeName>
    <alternativeName>
        <fullName>Secreted effector protein SpvC</fullName>
    </alternativeName>
</protein>
<proteinExistence type="inferred from homology"/>
<comment type="function">
    <text evidence="1">Secreted effector that irreversibly inactivates host MAP kinases by catalyzing the dephosphorylation of the phosphothreonine residue in the pT-X-pY motif present in MAPKs, via a beta-elimination reaction leading to a dehydrobutyrine residue.</text>
</comment>
<comment type="subcellular location">
    <subcellularLocation>
        <location evidence="1">Secreted</location>
    </subcellularLocation>
</comment>
<comment type="similarity">
    <text evidence="2">Belongs to the phosphothreonine lyase family.</text>
</comment>
<geneLocation type="plasmid">
    <name>pNL2001</name>
</geneLocation>
<accession>P0A2N1</accession>
<accession>P21456</accession>
<gene>
    <name type="primary">spvC</name>
    <name type="synonym">mkaD</name>
    <name type="synonym">vsdD</name>
</gene>
<feature type="initiator methionine" description="Removed" evidence="1">
    <location>
        <position position="1"/>
    </location>
</feature>
<feature type="chain" id="PRO_0000221670" description="MAPK phosphothreonine lyase">
    <location>
        <begin position="2"/>
        <end position="241"/>
    </location>
</feature>
<feature type="active site" description="Proton donor" evidence="1">
    <location>
        <position position="106"/>
    </location>
</feature>
<feature type="active site" description="Proton acceptor" evidence="1">
    <location>
        <position position="136"/>
    </location>
</feature>
<keyword id="KW-0456">Lyase</keyword>
<keyword id="KW-0614">Plasmid</keyword>
<keyword id="KW-0964">Secreted</keyword>
<keyword id="KW-0843">Virulence</keyword>
<evidence type="ECO:0000250" key="1"/>
<evidence type="ECO:0000305" key="2"/>
<reference key="1">
    <citation type="journal article" date="1994" name="Microbiology">
        <title>Virulence region of plasmid pNL2001 of Salmonella enteritidis.</title>
        <authorList>
            <person name="Suzuki S."/>
            <person name="Komase K."/>
            <person name="Matsui H."/>
            <person name="Abe A."/>
            <person name="Kawahara K."/>
            <person name="Tamura Y."/>
            <person name="Kijima M."/>
            <person name="Danbara H."/>
            <person name="Nakamura M."/>
            <person name="Sato S."/>
        </authorList>
    </citation>
    <scope>NUCLEOTIDE SEQUENCE [GENOMIC DNA]</scope>
    <source>
        <strain>AL1190</strain>
    </source>
</reference>
<dbReference type="EC" id="4.2.3.-"/>
<dbReference type="EMBL" id="D14490">
    <property type="protein sequence ID" value="BAA03384.1"/>
    <property type="molecule type" value="Genomic_DNA"/>
</dbReference>
<dbReference type="RefSeq" id="WP_001122242.1">
    <property type="nucleotide sequence ID" value="NZ_WIDC01000109.1"/>
</dbReference>
<dbReference type="SMR" id="P0A2N1"/>
<dbReference type="IntAct" id="P0A2N1">
    <property type="interactions" value="1"/>
</dbReference>
<dbReference type="MINT" id="P0A2N1"/>
<dbReference type="EvolutionaryTrace" id="P0A2N1"/>
<dbReference type="GO" id="GO:0005576">
    <property type="term" value="C:extracellular region"/>
    <property type="evidence" value="ECO:0007669"/>
    <property type="project" value="UniProtKB-SubCell"/>
</dbReference>
<dbReference type="GO" id="GO:0016829">
    <property type="term" value="F:lyase activity"/>
    <property type="evidence" value="ECO:0007669"/>
    <property type="project" value="UniProtKB-KW"/>
</dbReference>
<dbReference type="DisProt" id="DP02929"/>
<dbReference type="Gene3D" id="3.30.2430.10">
    <property type="entry name" value="phosphothreonine lyase"/>
    <property type="match status" value="1"/>
</dbReference>
<dbReference type="InterPro" id="IPR003519">
    <property type="entry name" value="OspF/SpvC"/>
</dbReference>
<dbReference type="InterPro" id="IPR038498">
    <property type="entry name" value="OspF/SpvC_sf"/>
</dbReference>
<dbReference type="NCBIfam" id="NF011781">
    <property type="entry name" value="PRK15245.1"/>
    <property type="match status" value="1"/>
</dbReference>
<dbReference type="Pfam" id="PF03536">
    <property type="entry name" value="VRP3"/>
    <property type="match status" value="1"/>
</dbReference>
<dbReference type="PRINTS" id="PR01342">
    <property type="entry name" value="SALVRPPROT"/>
</dbReference>
<name>SPVC_SALEN</name>
<sequence>MPINRPNLNLNIPPLNIVAAYDGAEIPSTNKHLKNNFNSLHNQMRKMPVSHFKEALDVPDYSGMRQSGFFAMSQGFQLNNHGYDVFIHARRESPQSQGKFAGDKFHISVLRDMVPQAFQALSGLLFSEDSPVDKWKVTDMEKVVQQARVSLGAQFTLYIKPDQENSQYSASFLHKTRQFIECLESRLSENGVISGQCPESDVHPENWKYLSYRNELRSGRDGGEMQRQALREEPFYRLMTE</sequence>
<organism>
    <name type="scientific">Salmonella enteritidis</name>
    <dbReference type="NCBI Taxonomy" id="149539"/>
    <lineage>
        <taxon>Bacteria</taxon>
        <taxon>Pseudomonadati</taxon>
        <taxon>Pseudomonadota</taxon>
        <taxon>Gammaproteobacteria</taxon>
        <taxon>Enterobacterales</taxon>
        <taxon>Enterobacteriaceae</taxon>
        <taxon>Salmonella</taxon>
    </lineage>
</organism>